<sequence>MKKQNNLRSLAAQAVEQVVEQGQSLSNVLPPLQQKVADKDKALLQELCFGVLRTLSQLEWLINKLMSRPMTGKQRTVHYLIMVGFYQLLYTRVPPHAALAETVEGAVSIKRPQLKGLINGVLRQFQRQQETLLNEFATSDARFLHPGWLVKRLQNAYPTQWQRIIDANNQRPPMWLRVNRTHHTRDGWLGLLEDAGMKGYPHPDYPDAVRLETPAPVHALPGFAEGWVTVQDASAQGCAVFLAPQNGEHILDLCAAPGGKTTHILEVAPEADVLAVDIDEQRLSRVYDNLKRLGMKATVKQGDGRYPAQWCGEQQFDRILLDAPCSATGVIRRHPDIKWLRRDRDIAELAQLQAEILDAVWPRLKPGGTLVYATCSVLPEENRDQIKTFLQRTPDAALSETGTPDQPGQQNLPGGEEGDGFFYAKLIKK</sequence>
<protein>
    <recommendedName>
        <fullName evidence="1">Ribosomal RNA small subunit methyltransferase B</fullName>
        <ecNumber evidence="1">2.1.1.176</ecNumber>
    </recommendedName>
    <alternativeName>
        <fullName evidence="1">16S rRNA m5C967 methyltransferase</fullName>
    </alternativeName>
    <alternativeName>
        <fullName evidence="1">rRNA (cytosine-C(5)-)-methyltransferase RsmB</fullName>
    </alternativeName>
</protein>
<evidence type="ECO:0000255" key="1">
    <source>
        <dbReference type="HAMAP-Rule" id="MF_01856"/>
    </source>
</evidence>
<evidence type="ECO:0000256" key="2">
    <source>
        <dbReference type="SAM" id="MobiDB-lite"/>
    </source>
</evidence>
<accession>C0PZV1</accession>
<gene>
    <name evidence="1" type="primary">rsmB</name>
    <name evidence="1" type="synonym">sun</name>
    <name type="ordered locus">SPC_3477</name>
</gene>
<keyword id="KW-0963">Cytoplasm</keyword>
<keyword id="KW-0489">Methyltransferase</keyword>
<keyword id="KW-0694">RNA-binding</keyword>
<keyword id="KW-0698">rRNA processing</keyword>
<keyword id="KW-0949">S-adenosyl-L-methionine</keyword>
<keyword id="KW-0808">Transferase</keyword>
<organism>
    <name type="scientific">Salmonella paratyphi C (strain RKS4594)</name>
    <dbReference type="NCBI Taxonomy" id="476213"/>
    <lineage>
        <taxon>Bacteria</taxon>
        <taxon>Pseudomonadati</taxon>
        <taxon>Pseudomonadota</taxon>
        <taxon>Gammaproteobacteria</taxon>
        <taxon>Enterobacterales</taxon>
        <taxon>Enterobacteriaceae</taxon>
        <taxon>Salmonella</taxon>
    </lineage>
</organism>
<name>RSMB_SALPC</name>
<dbReference type="EC" id="2.1.1.176" evidence="1"/>
<dbReference type="EMBL" id="CP000857">
    <property type="protein sequence ID" value="ACN47561.1"/>
    <property type="molecule type" value="Genomic_DNA"/>
</dbReference>
<dbReference type="RefSeq" id="WP_000744608.1">
    <property type="nucleotide sequence ID" value="NC_012125.1"/>
</dbReference>
<dbReference type="SMR" id="C0PZV1"/>
<dbReference type="KEGG" id="sei:SPC_3477"/>
<dbReference type="HOGENOM" id="CLU_005316_0_4_6"/>
<dbReference type="Proteomes" id="UP000001599">
    <property type="component" value="Chromosome"/>
</dbReference>
<dbReference type="GO" id="GO:0005829">
    <property type="term" value="C:cytosol"/>
    <property type="evidence" value="ECO:0007669"/>
    <property type="project" value="TreeGrafter"/>
</dbReference>
<dbReference type="GO" id="GO:0003723">
    <property type="term" value="F:RNA binding"/>
    <property type="evidence" value="ECO:0007669"/>
    <property type="project" value="UniProtKB-KW"/>
</dbReference>
<dbReference type="GO" id="GO:0009383">
    <property type="term" value="F:rRNA (cytosine-C5-)-methyltransferase activity"/>
    <property type="evidence" value="ECO:0007669"/>
    <property type="project" value="TreeGrafter"/>
</dbReference>
<dbReference type="GO" id="GO:0006355">
    <property type="term" value="P:regulation of DNA-templated transcription"/>
    <property type="evidence" value="ECO:0007669"/>
    <property type="project" value="InterPro"/>
</dbReference>
<dbReference type="GO" id="GO:0070475">
    <property type="term" value="P:rRNA base methylation"/>
    <property type="evidence" value="ECO:0007669"/>
    <property type="project" value="TreeGrafter"/>
</dbReference>
<dbReference type="CDD" id="cd02440">
    <property type="entry name" value="AdoMet_MTases"/>
    <property type="match status" value="1"/>
</dbReference>
<dbReference type="CDD" id="cd00620">
    <property type="entry name" value="Methyltransferase_Sun"/>
    <property type="match status" value="1"/>
</dbReference>
<dbReference type="FunFam" id="1.10.287.730:FF:000001">
    <property type="entry name" value="Ribosomal RNA small subunit methyltransferase B"/>
    <property type="match status" value="1"/>
</dbReference>
<dbReference type="FunFam" id="1.10.940.10:FF:000002">
    <property type="entry name" value="Ribosomal RNA small subunit methyltransferase B"/>
    <property type="match status" value="1"/>
</dbReference>
<dbReference type="FunFam" id="3.30.70.1170:FF:000002">
    <property type="entry name" value="Ribosomal RNA small subunit methyltransferase B"/>
    <property type="match status" value="1"/>
</dbReference>
<dbReference type="FunFam" id="3.40.50.150:FF:000022">
    <property type="entry name" value="Ribosomal RNA small subunit methyltransferase B"/>
    <property type="match status" value="1"/>
</dbReference>
<dbReference type="Gene3D" id="1.10.287.730">
    <property type="entry name" value="Helix hairpin bin"/>
    <property type="match status" value="1"/>
</dbReference>
<dbReference type="Gene3D" id="1.10.940.10">
    <property type="entry name" value="NusB-like"/>
    <property type="match status" value="1"/>
</dbReference>
<dbReference type="Gene3D" id="3.30.70.1170">
    <property type="entry name" value="Sun protein, domain 3"/>
    <property type="match status" value="1"/>
</dbReference>
<dbReference type="Gene3D" id="3.40.50.150">
    <property type="entry name" value="Vaccinia Virus protein VP39"/>
    <property type="match status" value="1"/>
</dbReference>
<dbReference type="HAMAP" id="MF_01856">
    <property type="entry name" value="16SrRNA_methyltr_B"/>
    <property type="match status" value="1"/>
</dbReference>
<dbReference type="InterPro" id="IPR049560">
    <property type="entry name" value="MeTrfase_RsmB-F_NOP2_cat"/>
</dbReference>
<dbReference type="InterPro" id="IPR001678">
    <property type="entry name" value="MeTrfase_RsmB-F_NOP2_dom"/>
</dbReference>
<dbReference type="InterPro" id="IPR035926">
    <property type="entry name" value="NusB-like_sf"/>
</dbReference>
<dbReference type="InterPro" id="IPR006027">
    <property type="entry name" value="NusB_RsmB_TIM44"/>
</dbReference>
<dbReference type="InterPro" id="IPR023267">
    <property type="entry name" value="RCMT"/>
</dbReference>
<dbReference type="InterPro" id="IPR004573">
    <property type="entry name" value="rRNA_ssu_MeTfrase_B"/>
</dbReference>
<dbReference type="InterPro" id="IPR023541">
    <property type="entry name" value="rRNA_ssu_MeTfrase_B_ent"/>
</dbReference>
<dbReference type="InterPro" id="IPR054728">
    <property type="entry name" value="RsmB-like_ferredoxin"/>
</dbReference>
<dbReference type="InterPro" id="IPR048019">
    <property type="entry name" value="RsmB-like_N"/>
</dbReference>
<dbReference type="InterPro" id="IPR018314">
    <property type="entry name" value="RsmB/NOL1/NOP2-like_CS"/>
</dbReference>
<dbReference type="InterPro" id="IPR029063">
    <property type="entry name" value="SAM-dependent_MTases_sf"/>
</dbReference>
<dbReference type="NCBIfam" id="NF008149">
    <property type="entry name" value="PRK10901.1"/>
    <property type="match status" value="1"/>
</dbReference>
<dbReference type="NCBIfam" id="NF011494">
    <property type="entry name" value="PRK14902.1"/>
    <property type="match status" value="1"/>
</dbReference>
<dbReference type="NCBIfam" id="TIGR00563">
    <property type="entry name" value="rsmB"/>
    <property type="match status" value="1"/>
</dbReference>
<dbReference type="PANTHER" id="PTHR22807:SF61">
    <property type="entry name" value="NOL1_NOP2_SUN FAMILY PROTEIN _ ANTITERMINATION NUSB DOMAIN-CONTAINING PROTEIN"/>
    <property type="match status" value="1"/>
</dbReference>
<dbReference type="PANTHER" id="PTHR22807">
    <property type="entry name" value="NOP2 YEAST -RELATED NOL1/NOP2/FMU SUN DOMAIN-CONTAINING"/>
    <property type="match status" value="1"/>
</dbReference>
<dbReference type="Pfam" id="PF01189">
    <property type="entry name" value="Methyltr_RsmB-F"/>
    <property type="match status" value="1"/>
</dbReference>
<dbReference type="Pfam" id="PF01029">
    <property type="entry name" value="NusB"/>
    <property type="match status" value="1"/>
</dbReference>
<dbReference type="Pfam" id="PF22458">
    <property type="entry name" value="RsmF-B_ferredox"/>
    <property type="match status" value="1"/>
</dbReference>
<dbReference type="PRINTS" id="PR02008">
    <property type="entry name" value="RCMTFAMILY"/>
</dbReference>
<dbReference type="SUPFAM" id="SSF48013">
    <property type="entry name" value="NusB-like"/>
    <property type="match status" value="1"/>
</dbReference>
<dbReference type="SUPFAM" id="SSF53335">
    <property type="entry name" value="S-adenosyl-L-methionine-dependent methyltransferases"/>
    <property type="match status" value="1"/>
</dbReference>
<dbReference type="PROSITE" id="PS01153">
    <property type="entry name" value="NOL1_NOP2_SUN"/>
    <property type="match status" value="1"/>
</dbReference>
<dbReference type="PROSITE" id="PS51686">
    <property type="entry name" value="SAM_MT_RSMB_NOP"/>
    <property type="match status" value="1"/>
</dbReference>
<proteinExistence type="inferred from homology"/>
<feature type="chain" id="PRO_1000188697" description="Ribosomal RNA small subunit methyltransferase B">
    <location>
        <begin position="1"/>
        <end position="429"/>
    </location>
</feature>
<feature type="region of interest" description="Disordered" evidence="2">
    <location>
        <begin position="397"/>
        <end position="419"/>
    </location>
</feature>
<feature type="compositionally biased region" description="Polar residues" evidence="2">
    <location>
        <begin position="400"/>
        <end position="412"/>
    </location>
</feature>
<feature type="active site" description="Nucleophile" evidence="1">
    <location>
        <position position="375"/>
    </location>
</feature>
<feature type="binding site" evidence="1">
    <location>
        <begin position="254"/>
        <end position="260"/>
    </location>
    <ligand>
        <name>S-adenosyl-L-methionine</name>
        <dbReference type="ChEBI" id="CHEBI:59789"/>
    </ligand>
</feature>
<feature type="binding site" evidence="1">
    <location>
        <position position="277"/>
    </location>
    <ligand>
        <name>S-adenosyl-L-methionine</name>
        <dbReference type="ChEBI" id="CHEBI:59789"/>
    </ligand>
</feature>
<feature type="binding site" evidence="1">
    <location>
        <position position="303"/>
    </location>
    <ligand>
        <name>S-adenosyl-L-methionine</name>
        <dbReference type="ChEBI" id="CHEBI:59789"/>
    </ligand>
</feature>
<feature type="binding site" evidence="1">
    <location>
        <position position="322"/>
    </location>
    <ligand>
        <name>S-adenosyl-L-methionine</name>
        <dbReference type="ChEBI" id="CHEBI:59789"/>
    </ligand>
</feature>
<reference key="1">
    <citation type="journal article" date="2009" name="PLoS ONE">
        <title>Salmonella paratyphi C: genetic divergence from Salmonella choleraesuis and pathogenic convergence with Salmonella typhi.</title>
        <authorList>
            <person name="Liu W.-Q."/>
            <person name="Feng Y."/>
            <person name="Wang Y."/>
            <person name="Zou Q.-H."/>
            <person name="Chen F."/>
            <person name="Guo J.-T."/>
            <person name="Peng Y.-H."/>
            <person name="Jin Y."/>
            <person name="Li Y.-G."/>
            <person name="Hu S.-N."/>
            <person name="Johnston R.N."/>
            <person name="Liu G.-R."/>
            <person name="Liu S.-L."/>
        </authorList>
    </citation>
    <scope>NUCLEOTIDE SEQUENCE [LARGE SCALE GENOMIC DNA]</scope>
    <source>
        <strain>RKS4594</strain>
    </source>
</reference>
<comment type="function">
    <text evidence="1">Specifically methylates the cytosine at position 967 (m5C967) of 16S rRNA.</text>
</comment>
<comment type="catalytic activity">
    <reaction evidence="1">
        <text>cytidine(967) in 16S rRNA + S-adenosyl-L-methionine = 5-methylcytidine(967) in 16S rRNA + S-adenosyl-L-homocysteine + H(+)</text>
        <dbReference type="Rhea" id="RHEA:42748"/>
        <dbReference type="Rhea" id="RHEA-COMP:10219"/>
        <dbReference type="Rhea" id="RHEA-COMP:10220"/>
        <dbReference type="ChEBI" id="CHEBI:15378"/>
        <dbReference type="ChEBI" id="CHEBI:57856"/>
        <dbReference type="ChEBI" id="CHEBI:59789"/>
        <dbReference type="ChEBI" id="CHEBI:74483"/>
        <dbReference type="ChEBI" id="CHEBI:82748"/>
        <dbReference type="EC" id="2.1.1.176"/>
    </reaction>
</comment>
<comment type="subcellular location">
    <subcellularLocation>
        <location evidence="1">Cytoplasm</location>
    </subcellularLocation>
</comment>
<comment type="similarity">
    <text evidence="1">Belongs to the class I-like SAM-binding methyltransferase superfamily. RsmB/NOP family.</text>
</comment>